<evidence type="ECO:0000250" key="1">
    <source>
        <dbReference type="UniProtKB" id="O60258"/>
    </source>
</evidence>
<evidence type="ECO:0000255" key="2"/>
<evidence type="ECO:0000269" key="3">
    <source>
    </source>
</evidence>
<evidence type="ECO:0000305" key="4"/>
<evidence type="ECO:0000312" key="5">
    <source>
        <dbReference type="EMBL" id="AAR20841.1"/>
    </source>
</evidence>
<organism>
    <name type="scientific">Danio rerio</name>
    <name type="common">Zebrafish</name>
    <name type="synonym">Brachydanio rerio</name>
    <dbReference type="NCBI Taxonomy" id="7955"/>
    <lineage>
        <taxon>Eukaryota</taxon>
        <taxon>Metazoa</taxon>
        <taxon>Chordata</taxon>
        <taxon>Craniata</taxon>
        <taxon>Vertebrata</taxon>
        <taxon>Euteleostomi</taxon>
        <taxon>Actinopterygii</taxon>
        <taxon>Neopterygii</taxon>
        <taxon>Teleostei</taxon>
        <taxon>Ostariophysi</taxon>
        <taxon>Cypriniformes</taxon>
        <taxon>Danionidae</taxon>
        <taxon>Danioninae</taxon>
        <taxon>Danio</taxon>
    </lineage>
</organism>
<name>FG17_DANRE</name>
<protein>
    <recommendedName>
        <fullName>Fibroblast growth factor 17</fullName>
        <shortName>FGF-17</shortName>
    </recommendedName>
    <alternativeName>
        <fullName>Fibroblast growth factor 17b</fullName>
        <shortName>FGF-17b</shortName>
    </alternativeName>
</protein>
<proteinExistence type="evidence at transcript level"/>
<keyword id="KW-0025">Alternative splicing</keyword>
<keyword id="KW-0217">Developmental protein</keyword>
<keyword id="KW-0221">Differentiation</keyword>
<keyword id="KW-0325">Glycoprotein</keyword>
<keyword id="KW-0339">Growth factor</keyword>
<keyword id="KW-0497">Mitogen</keyword>
<keyword id="KW-0524">Neurogenesis</keyword>
<keyword id="KW-1185">Reference proteome</keyword>
<keyword id="KW-0964">Secreted</keyword>
<keyword id="KW-0732">Signal</keyword>
<gene>
    <name type="primary">fgf17</name>
    <name type="synonym">fgf17b</name>
    <name type="ORF">si:ch211-237h13.2</name>
    <name type="ORF">zgc:101759</name>
</gene>
<sequence>MYGINQRYLYISFHFFVVWCHAQGEKNHPSPNFKQYVREQGSLTDQLSRRQVRVYQLYSRTSGKHVQIRGHRVSATADDGNSYARLYVETDTFGSRVRIKGAESGRYLCMNRRGKLVGKPNGRGRDCIFTEIVLENNYTALENARHEGWFVAFTRKGRPIRASKTRQNQREVHFIKRLHKGPQPFPNAEQPKHFEFISFPSTRRAKRNRKHQTAS</sequence>
<accession>Q6SJP8</accession>
<accession>B0V214</accession>
<accession>B0V215</accession>
<feature type="signal peptide" evidence="2">
    <location>
        <begin position="1"/>
        <end position="22"/>
    </location>
</feature>
<feature type="chain" id="PRO_0000008989" description="Fibroblast growth factor 17">
    <location>
        <begin position="23"/>
        <end position="215"/>
    </location>
</feature>
<feature type="glycosylation site" description="N-linked (GlcNAc...) asparagine" evidence="2">
    <location>
        <position position="137"/>
    </location>
</feature>
<feature type="splice variant" id="VSP_034101" description="In isoform 2." evidence="4">
    <location>
        <begin position="24"/>
        <end position="34"/>
    </location>
</feature>
<comment type="function">
    <text evidence="3">Involved in dorsal-ventral embryonic patterning, by promoting expression of bone morphogenetic protein (BMP) antagonists such as chd. Also involved in anterior-posterior neural patterning and in mesoderm induction.</text>
</comment>
<comment type="subcellular location">
    <subcellularLocation>
        <location evidence="1">Secreted</location>
    </subcellularLocation>
</comment>
<comment type="alternative products">
    <event type="alternative splicing"/>
    <isoform>
        <id>Q6SJP8-1</id>
        <name>1</name>
        <sequence type="displayed"/>
    </isoform>
    <isoform>
        <id>Q6SJP8-2</id>
        <name>2</name>
        <sequence type="described" ref="VSP_034101"/>
    </isoform>
</comment>
<comment type="developmental stage">
    <text evidence="3">Expressed both maternally and zygotically. Zygotic expression occurs in two stages: late blastulation/early gastrulation with greatest expression in the embryonic shield; and during segmentation with expression in the somites and presomitic mesoderm.</text>
</comment>
<comment type="similarity">
    <text evidence="2">Belongs to the heparin-binding growth factors family.</text>
</comment>
<comment type="sequence caution" evidence="4">
    <conflict type="erroneous gene model prediction">
        <sequence resource="EMBL-CDS" id="CAQ15049"/>
    </conflict>
</comment>
<dbReference type="EMBL" id="AY457142">
    <property type="protein sequence ID" value="AAR20841.1"/>
    <property type="molecule type" value="mRNA"/>
</dbReference>
<dbReference type="EMBL" id="CR936370">
    <property type="protein sequence ID" value="CAQ15049.1"/>
    <property type="status" value="ALT_SEQ"/>
    <property type="molecule type" value="Genomic_DNA"/>
</dbReference>
<dbReference type="EMBL" id="CR936370">
    <property type="protein sequence ID" value="CAQ15050.1"/>
    <property type="molecule type" value="Genomic_DNA"/>
</dbReference>
<dbReference type="EMBL" id="BC083269">
    <property type="protein sequence ID" value="AAH83269.1"/>
    <property type="molecule type" value="mRNA"/>
</dbReference>
<dbReference type="RefSeq" id="NP_999973.1">
    <molecule id="Q6SJP8-1"/>
    <property type="nucleotide sequence ID" value="NM_214808.1"/>
</dbReference>
<dbReference type="RefSeq" id="XP_005172548.1">
    <molecule id="Q6SJP8-2"/>
    <property type="nucleotide sequence ID" value="XM_005172491.5"/>
</dbReference>
<dbReference type="SMR" id="Q6SJP8"/>
<dbReference type="FunCoup" id="Q6SJP8">
    <property type="interactions" value="826"/>
</dbReference>
<dbReference type="STRING" id="7955.ENSDARP00000137629"/>
<dbReference type="GlyCosmos" id="Q6SJP8">
    <property type="glycosylation" value="1 site, No reported glycans"/>
</dbReference>
<dbReference type="PaxDb" id="7955-ENSDARP00000033747"/>
<dbReference type="Ensembl" id="ENSDART00000168252">
    <molecule id="Q6SJP8-1"/>
    <property type="protein sequence ID" value="ENSDARP00000137629"/>
    <property type="gene ID" value="ENSDARG00000102778"/>
</dbReference>
<dbReference type="GeneID" id="407737"/>
<dbReference type="KEGG" id="dre:407737"/>
<dbReference type="AGR" id="ZFIN:ZDB-GENE-040621-1"/>
<dbReference type="CTD" id="8822"/>
<dbReference type="ZFIN" id="ZDB-GENE-040621-1">
    <property type="gene designation" value="fgf17"/>
</dbReference>
<dbReference type="eggNOG" id="KOG3885">
    <property type="taxonomic scope" value="Eukaryota"/>
</dbReference>
<dbReference type="InParanoid" id="Q6SJP8"/>
<dbReference type="OMA" id="LCCQTQV"/>
<dbReference type="OrthoDB" id="5988014at2759"/>
<dbReference type="PhylomeDB" id="Q6SJP8"/>
<dbReference type="TreeFam" id="TF331233"/>
<dbReference type="Reactome" id="R-DRE-1257604">
    <property type="pathway name" value="PIP3 activates AKT signaling"/>
</dbReference>
<dbReference type="Reactome" id="R-DRE-190322">
    <property type="pathway name" value="FGFR4 ligand binding and activation"/>
</dbReference>
<dbReference type="Reactome" id="R-DRE-190371">
    <property type="pathway name" value="FGFR3b ligand binding and activation"/>
</dbReference>
<dbReference type="Reactome" id="R-DRE-190372">
    <property type="pathway name" value="FGFR3c ligand binding and activation"/>
</dbReference>
<dbReference type="Reactome" id="R-DRE-190373">
    <property type="pathway name" value="FGFR1c ligand binding and activation"/>
</dbReference>
<dbReference type="Reactome" id="R-DRE-190375">
    <property type="pathway name" value="FGFR2c ligand binding and activation"/>
</dbReference>
<dbReference type="Reactome" id="R-DRE-5654219">
    <property type="pathway name" value="Phospholipase C-mediated cascade: FGFR1"/>
</dbReference>
<dbReference type="Reactome" id="R-DRE-5654221">
    <property type="pathway name" value="Phospholipase C-mediated cascade, FGFR2"/>
</dbReference>
<dbReference type="Reactome" id="R-DRE-5654227">
    <property type="pathway name" value="Phospholipase C-mediated cascade, FGFR3"/>
</dbReference>
<dbReference type="Reactome" id="R-DRE-5654228">
    <property type="pathway name" value="Phospholipase C-mediated cascade, FGFR4"/>
</dbReference>
<dbReference type="Reactome" id="R-DRE-5654687">
    <property type="pathway name" value="Downstream signaling of activated FGFR1"/>
</dbReference>
<dbReference type="Reactome" id="R-DRE-5654688">
    <property type="pathway name" value="SHC-mediated cascade:FGFR1"/>
</dbReference>
<dbReference type="Reactome" id="R-DRE-5654689">
    <property type="pathway name" value="PI-3K cascade:FGFR1"/>
</dbReference>
<dbReference type="Reactome" id="R-DRE-5654693">
    <property type="pathway name" value="FRS-mediated FGFR1 signaling"/>
</dbReference>
<dbReference type="Reactome" id="R-DRE-5654699">
    <property type="pathway name" value="SHC-mediated cascade:FGFR2"/>
</dbReference>
<dbReference type="Reactome" id="R-DRE-5654700">
    <property type="pathway name" value="FRS-mediated FGFR2 signaling"/>
</dbReference>
<dbReference type="Reactome" id="R-DRE-5654704">
    <property type="pathway name" value="SHC-mediated cascade:FGFR3"/>
</dbReference>
<dbReference type="Reactome" id="R-DRE-5654706">
    <property type="pathway name" value="FRS-mediated FGFR3 signaling"/>
</dbReference>
<dbReference type="Reactome" id="R-DRE-5654712">
    <property type="pathway name" value="FRS-mediated FGFR4 signaling"/>
</dbReference>
<dbReference type="Reactome" id="R-DRE-5654726">
    <property type="pathway name" value="Negative regulation of FGFR1 signaling"/>
</dbReference>
<dbReference type="Reactome" id="R-DRE-5658623">
    <property type="pathway name" value="FGFRL1 modulation of FGFR1 signaling"/>
</dbReference>
<dbReference type="Reactome" id="R-DRE-5673001">
    <property type="pathway name" value="RAF/MAP kinase cascade"/>
</dbReference>
<dbReference type="Reactome" id="R-DRE-6811558">
    <property type="pathway name" value="PI5P, PP2A and IER3 Regulate PI3K/AKT Signaling"/>
</dbReference>
<dbReference type="SignaLink" id="Q6SJP8"/>
<dbReference type="PRO" id="PR:Q6SJP8"/>
<dbReference type="Proteomes" id="UP000000437">
    <property type="component" value="Chromosome 8"/>
</dbReference>
<dbReference type="Bgee" id="ENSDARG00000102778">
    <property type="expression patterns" value="Expressed in yolk syncytial layer and 48 other cell types or tissues"/>
</dbReference>
<dbReference type="ExpressionAtlas" id="Q6SJP8">
    <property type="expression patterns" value="baseline"/>
</dbReference>
<dbReference type="GO" id="GO:0005737">
    <property type="term" value="C:cytoplasm"/>
    <property type="evidence" value="ECO:0000318"/>
    <property type="project" value="GO_Central"/>
</dbReference>
<dbReference type="GO" id="GO:0005615">
    <property type="term" value="C:extracellular space"/>
    <property type="evidence" value="ECO:0000318"/>
    <property type="project" value="GO_Central"/>
</dbReference>
<dbReference type="GO" id="GO:0005104">
    <property type="term" value="F:fibroblast growth factor receptor binding"/>
    <property type="evidence" value="ECO:0000303"/>
    <property type="project" value="UniProtKB"/>
</dbReference>
<dbReference type="GO" id="GO:0008083">
    <property type="term" value="F:growth factor activity"/>
    <property type="evidence" value="ECO:0000318"/>
    <property type="project" value="GO_Central"/>
</dbReference>
<dbReference type="GO" id="GO:0005105">
    <property type="term" value="F:type 1 fibroblast growth factor receptor binding"/>
    <property type="evidence" value="ECO:0000318"/>
    <property type="project" value="GO_Central"/>
</dbReference>
<dbReference type="GO" id="GO:0005111">
    <property type="term" value="F:type 2 fibroblast growth factor receptor binding"/>
    <property type="evidence" value="ECO:0000318"/>
    <property type="project" value="GO_Central"/>
</dbReference>
<dbReference type="GO" id="GO:0009952">
    <property type="term" value="P:anterior/posterior pattern specification"/>
    <property type="evidence" value="ECO:0000315"/>
    <property type="project" value="UniProtKB"/>
</dbReference>
<dbReference type="GO" id="GO:0008543">
    <property type="term" value="P:fibroblast growth factor receptor signaling pathway"/>
    <property type="evidence" value="ECO:0000318"/>
    <property type="project" value="GO_Central"/>
</dbReference>
<dbReference type="GO" id="GO:0007498">
    <property type="term" value="P:mesoderm development"/>
    <property type="evidence" value="ECO:0000315"/>
    <property type="project" value="UniProtKB"/>
</dbReference>
<dbReference type="GO" id="GO:0042664">
    <property type="term" value="P:negative regulation of endodermal cell fate specification"/>
    <property type="evidence" value="ECO:0000316"/>
    <property type="project" value="ZFIN"/>
</dbReference>
<dbReference type="GO" id="GO:0007399">
    <property type="term" value="P:nervous system development"/>
    <property type="evidence" value="ECO:0000315"/>
    <property type="project" value="UniProtKB"/>
</dbReference>
<dbReference type="GO" id="GO:0022008">
    <property type="term" value="P:neurogenesis"/>
    <property type="evidence" value="ECO:0000318"/>
    <property type="project" value="GO_Central"/>
</dbReference>
<dbReference type="GO" id="GO:0051781">
    <property type="term" value="P:positive regulation of cell division"/>
    <property type="evidence" value="ECO:0007669"/>
    <property type="project" value="UniProtKB-KW"/>
</dbReference>
<dbReference type="GO" id="GO:0008284">
    <property type="term" value="P:positive regulation of cell population proliferation"/>
    <property type="evidence" value="ECO:0000318"/>
    <property type="project" value="GO_Central"/>
</dbReference>
<dbReference type="GO" id="GO:0043410">
    <property type="term" value="P:positive regulation of MAPK cascade"/>
    <property type="evidence" value="ECO:0000318"/>
    <property type="project" value="GO_Central"/>
</dbReference>
<dbReference type="GO" id="GO:0030334">
    <property type="term" value="P:regulation of cell migration"/>
    <property type="evidence" value="ECO:0000318"/>
    <property type="project" value="GO_Central"/>
</dbReference>
<dbReference type="CDD" id="cd23323">
    <property type="entry name" value="beta-trefoil_FGF17"/>
    <property type="match status" value="1"/>
</dbReference>
<dbReference type="FunFam" id="2.80.10.50:FF:000007">
    <property type="entry name" value="Fibroblast growth factor"/>
    <property type="match status" value="1"/>
</dbReference>
<dbReference type="Gene3D" id="2.80.10.50">
    <property type="match status" value="1"/>
</dbReference>
<dbReference type="InterPro" id="IPR002209">
    <property type="entry name" value="Fibroblast_GF_fam"/>
</dbReference>
<dbReference type="InterPro" id="IPR008996">
    <property type="entry name" value="IL1/FGF"/>
</dbReference>
<dbReference type="PANTHER" id="PTHR11486">
    <property type="entry name" value="FIBROBLAST GROWTH FACTOR"/>
    <property type="match status" value="1"/>
</dbReference>
<dbReference type="Pfam" id="PF00167">
    <property type="entry name" value="FGF"/>
    <property type="match status" value="1"/>
</dbReference>
<dbReference type="PRINTS" id="PR00262">
    <property type="entry name" value="IL1HBGF"/>
</dbReference>
<dbReference type="SMART" id="SM00442">
    <property type="entry name" value="FGF"/>
    <property type="match status" value="1"/>
</dbReference>
<dbReference type="SUPFAM" id="SSF50353">
    <property type="entry name" value="Cytokine"/>
    <property type="match status" value="1"/>
</dbReference>
<dbReference type="PROSITE" id="PS00247">
    <property type="entry name" value="HBGF_FGF"/>
    <property type="match status" value="1"/>
</dbReference>
<reference evidence="4 5" key="1">
    <citation type="journal article" date="2004" name="Dev. Biol.">
        <title>fgf17b, a novel member of Fgf family, helps patterning zebrafish embryos.</title>
        <authorList>
            <person name="Cao Y."/>
            <person name="Zhao J."/>
            <person name="Sun Z."/>
            <person name="Zhao Z."/>
            <person name="Postlethwait J."/>
            <person name="Meng A."/>
        </authorList>
    </citation>
    <scope>NUCLEOTIDE SEQUENCE [MRNA] (ISOFORM 1)</scope>
    <scope>FUNCTION</scope>
    <scope>DEVELOPMENTAL STAGE</scope>
    <source>
        <tissue evidence="3">Embryo</tissue>
    </source>
</reference>
<reference key="2">
    <citation type="journal article" date="2013" name="Nature">
        <title>The zebrafish reference genome sequence and its relationship to the human genome.</title>
        <authorList>
            <person name="Howe K."/>
            <person name="Clark M.D."/>
            <person name="Torroja C.F."/>
            <person name="Torrance J."/>
            <person name="Berthelot C."/>
            <person name="Muffato M."/>
            <person name="Collins J.E."/>
            <person name="Humphray S."/>
            <person name="McLaren K."/>
            <person name="Matthews L."/>
            <person name="McLaren S."/>
            <person name="Sealy I."/>
            <person name="Caccamo M."/>
            <person name="Churcher C."/>
            <person name="Scott C."/>
            <person name="Barrett J.C."/>
            <person name="Koch R."/>
            <person name="Rauch G.J."/>
            <person name="White S."/>
            <person name="Chow W."/>
            <person name="Kilian B."/>
            <person name="Quintais L.T."/>
            <person name="Guerra-Assuncao J.A."/>
            <person name="Zhou Y."/>
            <person name="Gu Y."/>
            <person name="Yen J."/>
            <person name="Vogel J.H."/>
            <person name="Eyre T."/>
            <person name="Redmond S."/>
            <person name="Banerjee R."/>
            <person name="Chi J."/>
            <person name="Fu B."/>
            <person name="Langley E."/>
            <person name="Maguire S.F."/>
            <person name="Laird G.K."/>
            <person name="Lloyd D."/>
            <person name="Kenyon E."/>
            <person name="Donaldson S."/>
            <person name="Sehra H."/>
            <person name="Almeida-King J."/>
            <person name="Loveland J."/>
            <person name="Trevanion S."/>
            <person name="Jones M."/>
            <person name="Quail M."/>
            <person name="Willey D."/>
            <person name="Hunt A."/>
            <person name="Burton J."/>
            <person name="Sims S."/>
            <person name="McLay K."/>
            <person name="Plumb B."/>
            <person name="Davis J."/>
            <person name="Clee C."/>
            <person name="Oliver K."/>
            <person name="Clark R."/>
            <person name="Riddle C."/>
            <person name="Elliot D."/>
            <person name="Threadgold G."/>
            <person name="Harden G."/>
            <person name="Ware D."/>
            <person name="Begum S."/>
            <person name="Mortimore B."/>
            <person name="Kerry G."/>
            <person name="Heath P."/>
            <person name="Phillimore B."/>
            <person name="Tracey A."/>
            <person name="Corby N."/>
            <person name="Dunn M."/>
            <person name="Johnson C."/>
            <person name="Wood J."/>
            <person name="Clark S."/>
            <person name="Pelan S."/>
            <person name="Griffiths G."/>
            <person name="Smith M."/>
            <person name="Glithero R."/>
            <person name="Howden P."/>
            <person name="Barker N."/>
            <person name="Lloyd C."/>
            <person name="Stevens C."/>
            <person name="Harley J."/>
            <person name="Holt K."/>
            <person name="Panagiotidis G."/>
            <person name="Lovell J."/>
            <person name="Beasley H."/>
            <person name="Henderson C."/>
            <person name="Gordon D."/>
            <person name="Auger K."/>
            <person name="Wright D."/>
            <person name="Collins J."/>
            <person name="Raisen C."/>
            <person name="Dyer L."/>
            <person name="Leung K."/>
            <person name="Robertson L."/>
            <person name="Ambridge K."/>
            <person name="Leongamornlert D."/>
            <person name="McGuire S."/>
            <person name="Gilderthorp R."/>
            <person name="Griffiths C."/>
            <person name="Manthravadi D."/>
            <person name="Nichol S."/>
            <person name="Barker G."/>
            <person name="Whitehead S."/>
            <person name="Kay M."/>
            <person name="Brown J."/>
            <person name="Murnane C."/>
            <person name="Gray E."/>
            <person name="Humphries M."/>
            <person name="Sycamore N."/>
            <person name="Barker D."/>
            <person name="Saunders D."/>
            <person name="Wallis J."/>
            <person name="Babbage A."/>
            <person name="Hammond S."/>
            <person name="Mashreghi-Mohammadi M."/>
            <person name="Barr L."/>
            <person name="Martin S."/>
            <person name="Wray P."/>
            <person name="Ellington A."/>
            <person name="Matthews N."/>
            <person name="Ellwood M."/>
            <person name="Woodmansey R."/>
            <person name="Clark G."/>
            <person name="Cooper J."/>
            <person name="Tromans A."/>
            <person name="Grafham D."/>
            <person name="Skuce C."/>
            <person name="Pandian R."/>
            <person name="Andrews R."/>
            <person name="Harrison E."/>
            <person name="Kimberley A."/>
            <person name="Garnett J."/>
            <person name="Fosker N."/>
            <person name="Hall R."/>
            <person name="Garner P."/>
            <person name="Kelly D."/>
            <person name="Bird C."/>
            <person name="Palmer S."/>
            <person name="Gehring I."/>
            <person name="Berger A."/>
            <person name="Dooley C.M."/>
            <person name="Ersan-Urun Z."/>
            <person name="Eser C."/>
            <person name="Geiger H."/>
            <person name="Geisler M."/>
            <person name="Karotki L."/>
            <person name="Kirn A."/>
            <person name="Konantz J."/>
            <person name="Konantz M."/>
            <person name="Oberlander M."/>
            <person name="Rudolph-Geiger S."/>
            <person name="Teucke M."/>
            <person name="Lanz C."/>
            <person name="Raddatz G."/>
            <person name="Osoegawa K."/>
            <person name="Zhu B."/>
            <person name="Rapp A."/>
            <person name="Widaa S."/>
            <person name="Langford C."/>
            <person name="Yang F."/>
            <person name="Schuster S.C."/>
            <person name="Carter N.P."/>
            <person name="Harrow J."/>
            <person name="Ning Z."/>
            <person name="Herrero J."/>
            <person name="Searle S.M."/>
            <person name="Enright A."/>
            <person name="Geisler R."/>
            <person name="Plasterk R.H."/>
            <person name="Lee C."/>
            <person name="Westerfield M."/>
            <person name="de Jong P.J."/>
            <person name="Zon L.I."/>
            <person name="Postlethwait J.H."/>
            <person name="Nusslein-Volhard C."/>
            <person name="Hubbard T.J."/>
            <person name="Roest Crollius H."/>
            <person name="Rogers J."/>
            <person name="Stemple D.L."/>
        </authorList>
    </citation>
    <scope>NUCLEOTIDE SEQUENCE [LARGE SCALE GENOMIC DNA]</scope>
    <source>
        <strain>Tuebingen</strain>
    </source>
</reference>
<reference key="3">
    <citation type="submission" date="2004-10" db="EMBL/GenBank/DDBJ databases">
        <authorList>
            <consortium name="NIH - Zebrafish Gene Collection (ZGC) project"/>
        </authorList>
    </citation>
    <scope>NUCLEOTIDE SEQUENCE [LARGE SCALE MRNA] (ISOFORM 1)</scope>
    <source>
        <tissue>Olfactory epithelium</tissue>
    </source>
</reference>